<reference key="1">
    <citation type="journal article" date="2008" name="Environ. Microbiol.">
        <title>The genome of Erwinia tasmaniensis strain Et1/99, a non-pathogenic bacterium in the genus Erwinia.</title>
        <authorList>
            <person name="Kube M."/>
            <person name="Migdoll A.M."/>
            <person name="Mueller I."/>
            <person name="Kuhl H."/>
            <person name="Beck A."/>
            <person name="Reinhardt R."/>
            <person name="Geider K."/>
        </authorList>
    </citation>
    <scope>NUCLEOTIDE SEQUENCE [LARGE SCALE GENOMIC DNA]</scope>
    <source>
        <strain>DSM 17950 / CFBP 7177 / CIP 109463 / NCPPB 4357 / Et1/99</strain>
    </source>
</reference>
<keyword id="KW-0963">Cytoplasm</keyword>
<keyword id="KW-0369">Histidine metabolism</keyword>
<keyword id="KW-0378">Hydrolase</keyword>
<keyword id="KW-0408">Iron</keyword>
<keyword id="KW-0479">Metal-binding</keyword>
<keyword id="KW-1185">Reference proteome</keyword>
<keyword id="KW-0862">Zinc</keyword>
<comment type="function">
    <text evidence="1">Catalyzes the hydrolytic cleavage of the carbon-nitrogen bond in imidazolone-5-propanoate to yield N-formimidoyl-L-glutamate. It is the third step in the universal histidine degradation pathway.</text>
</comment>
<comment type="catalytic activity">
    <reaction evidence="1">
        <text>4-imidazolone-5-propanoate + H2O = N-formimidoyl-L-glutamate</text>
        <dbReference type="Rhea" id="RHEA:23660"/>
        <dbReference type="ChEBI" id="CHEBI:15377"/>
        <dbReference type="ChEBI" id="CHEBI:58928"/>
        <dbReference type="ChEBI" id="CHEBI:77893"/>
        <dbReference type="EC" id="3.5.2.7"/>
    </reaction>
</comment>
<comment type="cofactor">
    <cofactor evidence="1">
        <name>Zn(2+)</name>
        <dbReference type="ChEBI" id="CHEBI:29105"/>
    </cofactor>
    <cofactor evidence="1">
        <name>Fe(3+)</name>
        <dbReference type="ChEBI" id="CHEBI:29034"/>
    </cofactor>
    <text evidence="1">Binds 1 zinc or iron ion per subunit.</text>
</comment>
<comment type="pathway">
    <text evidence="1">Amino-acid degradation; L-histidine degradation into L-glutamate; N-formimidoyl-L-glutamate from L-histidine: step 3/3.</text>
</comment>
<comment type="subcellular location">
    <subcellularLocation>
        <location evidence="1">Cytoplasm</location>
    </subcellularLocation>
</comment>
<comment type="similarity">
    <text evidence="1">Belongs to the metallo-dependent hydrolases superfamily. HutI family.</text>
</comment>
<evidence type="ECO:0000255" key="1">
    <source>
        <dbReference type="HAMAP-Rule" id="MF_00372"/>
    </source>
</evidence>
<sequence>MNQQLSCDHLWFGADIVTMQNGRYGIIEQGAIAVSGQQIIWVGPYADSAHIQARQRTDLGGGIVTPGLVDCHTHLVFGGDRSDEFEQRLNGVSYSEIAAQVGGILATVRATRSASQAELVDAARQRLQHLLAEGVTTVEIKSGYGLEVASELRMLQAIRQLAQQVPAQIQATCLAAHAVPPEYRHDPEAWVDVICDQLLPQVAAEGLADAVDAFCEHLAFSPDQVRRVFIAAKALGFALKLHAEQLSSLGGSALAAEFDALSADHVEYATESDVAAMAQHGTVAVLLPGAFYLLREKQRPPVELFRRYQVPMALASDANPGTSPALSLRLMMNMGCTLFGMTPEEALAGVTLHAARALGLAQRIGSLESGKMADFVHWPLARPAELVYWLGGQLPCRVIFRGEER</sequence>
<name>HUTI_ERWT9</name>
<dbReference type="EC" id="3.5.2.7" evidence="1"/>
<dbReference type="EMBL" id="CU468135">
    <property type="protein sequence ID" value="CAO97266.1"/>
    <property type="molecule type" value="Genomic_DNA"/>
</dbReference>
<dbReference type="RefSeq" id="WP_012441935.1">
    <property type="nucleotide sequence ID" value="NC_010694.1"/>
</dbReference>
<dbReference type="SMR" id="B2VC08"/>
<dbReference type="STRING" id="465817.ETA_22200"/>
<dbReference type="KEGG" id="eta:ETA_22200"/>
<dbReference type="eggNOG" id="COG1228">
    <property type="taxonomic scope" value="Bacteria"/>
</dbReference>
<dbReference type="HOGENOM" id="CLU_041647_0_0_6"/>
<dbReference type="OrthoDB" id="9776455at2"/>
<dbReference type="UniPathway" id="UPA00379">
    <property type="reaction ID" value="UER00551"/>
</dbReference>
<dbReference type="Proteomes" id="UP000001726">
    <property type="component" value="Chromosome"/>
</dbReference>
<dbReference type="GO" id="GO:0005737">
    <property type="term" value="C:cytoplasm"/>
    <property type="evidence" value="ECO:0007669"/>
    <property type="project" value="UniProtKB-SubCell"/>
</dbReference>
<dbReference type="GO" id="GO:0050480">
    <property type="term" value="F:imidazolonepropionase activity"/>
    <property type="evidence" value="ECO:0007669"/>
    <property type="project" value="UniProtKB-UniRule"/>
</dbReference>
<dbReference type="GO" id="GO:0005506">
    <property type="term" value="F:iron ion binding"/>
    <property type="evidence" value="ECO:0007669"/>
    <property type="project" value="UniProtKB-UniRule"/>
</dbReference>
<dbReference type="GO" id="GO:0008270">
    <property type="term" value="F:zinc ion binding"/>
    <property type="evidence" value="ECO:0007669"/>
    <property type="project" value="UniProtKB-UniRule"/>
</dbReference>
<dbReference type="GO" id="GO:0019556">
    <property type="term" value="P:L-histidine catabolic process to glutamate and formamide"/>
    <property type="evidence" value="ECO:0007669"/>
    <property type="project" value="UniProtKB-UniPathway"/>
</dbReference>
<dbReference type="GO" id="GO:0019557">
    <property type="term" value="P:L-histidine catabolic process to glutamate and formate"/>
    <property type="evidence" value="ECO:0007669"/>
    <property type="project" value="UniProtKB-UniPathway"/>
</dbReference>
<dbReference type="CDD" id="cd01296">
    <property type="entry name" value="Imidazolone-5PH"/>
    <property type="match status" value="1"/>
</dbReference>
<dbReference type="FunFam" id="3.20.20.140:FF:000007">
    <property type="entry name" value="Imidazolonepropionase"/>
    <property type="match status" value="1"/>
</dbReference>
<dbReference type="Gene3D" id="3.20.20.140">
    <property type="entry name" value="Metal-dependent hydrolases"/>
    <property type="match status" value="1"/>
</dbReference>
<dbReference type="Gene3D" id="2.30.40.10">
    <property type="entry name" value="Urease, subunit C, domain 1"/>
    <property type="match status" value="1"/>
</dbReference>
<dbReference type="HAMAP" id="MF_00372">
    <property type="entry name" value="HutI"/>
    <property type="match status" value="1"/>
</dbReference>
<dbReference type="InterPro" id="IPR006680">
    <property type="entry name" value="Amidohydro-rel"/>
</dbReference>
<dbReference type="InterPro" id="IPR005920">
    <property type="entry name" value="HutI"/>
</dbReference>
<dbReference type="InterPro" id="IPR011059">
    <property type="entry name" value="Metal-dep_hydrolase_composite"/>
</dbReference>
<dbReference type="InterPro" id="IPR032466">
    <property type="entry name" value="Metal_Hydrolase"/>
</dbReference>
<dbReference type="NCBIfam" id="TIGR01224">
    <property type="entry name" value="hutI"/>
    <property type="match status" value="1"/>
</dbReference>
<dbReference type="PANTHER" id="PTHR42752">
    <property type="entry name" value="IMIDAZOLONEPROPIONASE"/>
    <property type="match status" value="1"/>
</dbReference>
<dbReference type="PANTHER" id="PTHR42752:SF1">
    <property type="entry name" value="IMIDAZOLONEPROPIONASE-RELATED"/>
    <property type="match status" value="1"/>
</dbReference>
<dbReference type="Pfam" id="PF01979">
    <property type="entry name" value="Amidohydro_1"/>
    <property type="match status" value="1"/>
</dbReference>
<dbReference type="SUPFAM" id="SSF51338">
    <property type="entry name" value="Composite domain of metallo-dependent hydrolases"/>
    <property type="match status" value="1"/>
</dbReference>
<dbReference type="SUPFAM" id="SSF51556">
    <property type="entry name" value="Metallo-dependent hydrolases"/>
    <property type="match status" value="1"/>
</dbReference>
<feature type="chain" id="PRO_1000121542" description="Imidazolonepropionase">
    <location>
        <begin position="1"/>
        <end position="405"/>
    </location>
</feature>
<feature type="binding site" evidence="1">
    <location>
        <position position="72"/>
    </location>
    <ligand>
        <name>Fe(3+)</name>
        <dbReference type="ChEBI" id="CHEBI:29034"/>
    </ligand>
</feature>
<feature type="binding site" evidence="1">
    <location>
        <position position="72"/>
    </location>
    <ligand>
        <name>Zn(2+)</name>
        <dbReference type="ChEBI" id="CHEBI:29105"/>
    </ligand>
</feature>
<feature type="binding site" evidence="1">
    <location>
        <position position="74"/>
    </location>
    <ligand>
        <name>Fe(3+)</name>
        <dbReference type="ChEBI" id="CHEBI:29034"/>
    </ligand>
</feature>
<feature type="binding site" evidence="1">
    <location>
        <position position="74"/>
    </location>
    <ligand>
        <name>Zn(2+)</name>
        <dbReference type="ChEBI" id="CHEBI:29105"/>
    </ligand>
</feature>
<feature type="binding site" evidence="1">
    <location>
        <position position="81"/>
    </location>
    <ligand>
        <name>4-imidazolone-5-propanoate</name>
        <dbReference type="ChEBI" id="CHEBI:77893"/>
    </ligand>
</feature>
<feature type="binding site" evidence="1">
    <location>
        <position position="144"/>
    </location>
    <ligand>
        <name>4-imidazolone-5-propanoate</name>
        <dbReference type="ChEBI" id="CHEBI:77893"/>
    </ligand>
</feature>
<feature type="binding site" evidence="1">
    <location>
        <position position="144"/>
    </location>
    <ligand>
        <name>N-formimidoyl-L-glutamate</name>
        <dbReference type="ChEBI" id="CHEBI:58928"/>
    </ligand>
</feature>
<feature type="binding site" evidence="1">
    <location>
        <position position="177"/>
    </location>
    <ligand>
        <name>4-imidazolone-5-propanoate</name>
        <dbReference type="ChEBI" id="CHEBI:77893"/>
    </ligand>
</feature>
<feature type="binding site" evidence="1">
    <location>
        <position position="242"/>
    </location>
    <ligand>
        <name>Fe(3+)</name>
        <dbReference type="ChEBI" id="CHEBI:29034"/>
    </ligand>
</feature>
<feature type="binding site" evidence="1">
    <location>
        <position position="242"/>
    </location>
    <ligand>
        <name>Zn(2+)</name>
        <dbReference type="ChEBI" id="CHEBI:29105"/>
    </ligand>
</feature>
<feature type="binding site" evidence="1">
    <location>
        <position position="245"/>
    </location>
    <ligand>
        <name>4-imidazolone-5-propanoate</name>
        <dbReference type="ChEBI" id="CHEBI:77893"/>
    </ligand>
</feature>
<feature type="binding site" evidence="1">
    <location>
        <position position="317"/>
    </location>
    <ligand>
        <name>Fe(3+)</name>
        <dbReference type="ChEBI" id="CHEBI:29034"/>
    </ligand>
</feature>
<feature type="binding site" evidence="1">
    <location>
        <position position="317"/>
    </location>
    <ligand>
        <name>Zn(2+)</name>
        <dbReference type="ChEBI" id="CHEBI:29105"/>
    </ligand>
</feature>
<feature type="binding site" evidence="1">
    <location>
        <position position="319"/>
    </location>
    <ligand>
        <name>N-formimidoyl-L-glutamate</name>
        <dbReference type="ChEBI" id="CHEBI:58928"/>
    </ligand>
</feature>
<feature type="binding site" evidence="1">
    <location>
        <position position="321"/>
    </location>
    <ligand>
        <name>N-formimidoyl-L-glutamate</name>
        <dbReference type="ChEBI" id="CHEBI:58928"/>
    </ligand>
</feature>
<feature type="binding site" evidence="1">
    <location>
        <position position="322"/>
    </location>
    <ligand>
        <name>4-imidazolone-5-propanoate</name>
        <dbReference type="ChEBI" id="CHEBI:77893"/>
    </ligand>
</feature>
<proteinExistence type="inferred from homology"/>
<organism>
    <name type="scientific">Erwinia tasmaniensis (strain DSM 17950 / CFBP 7177 / CIP 109463 / NCPPB 4357 / Et1/99)</name>
    <dbReference type="NCBI Taxonomy" id="465817"/>
    <lineage>
        <taxon>Bacteria</taxon>
        <taxon>Pseudomonadati</taxon>
        <taxon>Pseudomonadota</taxon>
        <taxon>Gammaproteobacteria</taxon>
        <taxon>Enterobacterales</taxon>
        <taxon>Erwiniaceae</taxon>
        <taxon>Erwinia</taxon>
    </lineage>
</organism>
<accession>B2VC08</accession>
<protein>
    <recommendedName>
        <fullName evidence="1">Imidazolonepropionase</fullName>
        <ecNumber evidence="1">3.5.2.7</ecNumber>
    </recommendedName>
    <alternativeName>
        <fullName evidence="1">Imidazolone-5-propionate hydrolase</fullName>
    </alternativeName>
</protein>
<gene>
    <name evidence="1" type="primary">hutI</name>
    <name type="ordered locus">ETA_22200</name>
</gene>